<dbReference type="EC" id="6.1.1.-" evidence="1"/>
<dbReference type="EMBL" id="CP000381">
    <property type="protein sequence ID" value="ABX73933.1"/>
    <property type="molecule type" value="Genomic_DNA"/>
</dbReference>
<dbReference type="RefSeq" id="WP_012222024.1">
    <property type="nucleotide sequence ID" value="NC_010120.1"/>
</dbReference>
<dbReference type="SMR" id="A9M2P1"/>
<dbReference type="KEGG" id="nmn:NMCC_1793"/>
<dbReference type="HOGENOM" id="CLU_015768_0_1_4"/>
<dbReference type="Proteomes" id="UP000001177">
    <property type="component" value="Chromosome"/>
</dbReference>
<dbReference type="GO" id="GO:0005829">
    <property type="term" value="C:cytosol"/>
    <property type="evidence" value="ECO:0007669"/>
    <property type="project" value="TreeGrafter"/>
</dbReference>
<dbReference type="GO" id="GO:0005524">
    <property type="term" value="F:ATP binding"/>
    <property type="evidence" value="ECO:0007669"/>
    <property type="project" value="UniProtKB-KW"/>
</dbReference>
<dbReference type="GO" id="GO:0004818">
    <property type="term" value="F:glutamate-tRNA ligase activity"/>
    <property type="evidence" value="ECO:0007669"/>
    <property type="project" value="TreeGrafter"/>
</dbReference>
<dbReference type="GO" id="GO:0008270">
    <property type="term" value="F:zinc ion binding"/>
    <property type="evidence" value="ECO:0007669"/>
    <property type="project" value="UniProtKB-UniRule"/>
</dbReference>
<dbReference type="GO" id="GO:0006424">
    <property type="term" value="P:glutamyl-tRNA aminoacylation"/>
    <property type="evidence" value="ECO:0007669"/>
    <property type="project" value="InterPro"/>
</dbReference>
<dbReference type="GO" id="GO:0006400">
    <property type="term" value="P:tRNA modification"/>
    <property type="evidence" value="ECO:0007669"/>
    <property type="project" value="InterPro"/>
</dbReference>
<dbReference type="FunFam" id="3.40.50.620:FF:000093">
    <property type="entry name" value="Glutamyl-Q tRNA(Asp) synthetase"/>
    <property type="match status" value="1"/>
</dbReference>
<dbReference type="Gene3D" id="3.40.50.620">
    <property type="entry name" value="HUPs"/>
    <property type="match status" value="1"/>
</dbReference>
<dbReference type="HAMAP" id="MF_01428">
    <property type="entry name" value="Glu_Q_tRNA_synth"/>
    <property type="match status" value="1"/>
</dbReference>
<dbReference type="InterPro" id="IPR022380">
    <property type="entry name" value="Glu-Q_tRNA(Asp)_Synthase"/>
</dbReference>
<dbReference type="InterPro" id="IPR000924">
    <property type="entry name" value="Glu/Gln-tRNA-synth"/>
</dbReference>
<dbReference type="InterPro" id="IPR020058">
    <property type="entry name" value="Glu/Gln-tRNA-synth_Ib_cat-dom"/>
</dbReference>
<dbReference type="InterPro" id="IPR049940">
    <property type="entry name" value="GluQ/Sye"/>
</dbReference>
<dbReference type="InterPro" id="IPR014729">
    <property type="entry name" value="Rossmann-like_a/b/a_fold"/>
</dbReference>
<dbReference type="NCBIfam" id="NF004314">
    <property type="entry name" value="PRK05710.1-3"/>
    <property type="match status" value="1"/>
</dbReference>
<dbReference type="NCBIfam" id="TIGR03838">
    <property type="entry name" value="queuosine_YadB"/>
    <property type="match status" value="1"/>
</dbReference>
<dbReference type="PANTHER" id="PTHR43311">
    <property type="entry name" value="GLUTAMATE--TRNA LIGASE"/>
    <property type="match status" value="1"/>
</dbReference>
<dbReference type="PANTHER" id="PTHR43311:SF1">
    <property type="entry name" value="GLUTAMYL-Q TRNA(ASP) SYNTHETASE"/>
    <property type="match status" value="1"/>
</dbReference>
<dbReference type="Pfam" id="PF00749">
    <property type="entry name" value="tRNA-synt_1c"/>
    <property type="match status" value="1"/>
</dbReference>
<dbReference type="PRINTS" id="PR00987">
    <property type="entry name" value="TRNASYNTHGLU"/>
</dbReference>
<dbReference type="SUPFAM" id="SSF52374">
    <property type="entry name" value="Nucleotidylyl transferase"/>
    <property type="match status" value="1"/>
</dbReference>
<reference key="1">
    <citation type="journal article" date="2008" name="Genomics">
        <title>Characterization of ST-4821 complex, a unique Neisseria meningitidis clone.</title>
        <authorList>
            <person name="Peng J."/>
            <person name="Yang L."/>
            <person name="Yang F."/>
            <person name="Yang J."/>
            <person name="Yan Y."/>
            <person name="Nie H."/>
            <person name="Zhang X."/>
            <person name="Xiong Z."/>
            <person name="Jiang Y."/>
            <person name="Cheng F."/>
            <person name="Xu X."/>
            <person name="Chen S."/>
            <person name="Sun L."/>
            <person name="Li W."/>
            <person name="Shen Y."/>
            <person name="Shao Z."/>
            <person name="Liang X."/>
            <person name="Xu J."/>
            <person name="Jin Q."/>
        </authorList>
    </citation>
    <scope>NUCLEOTIDE SEQUENCE [LARGE SCALE GENOMIC DNA]</scope>
    <source>
        <strain>053442</strain>
    </source>
</reference>
<feature type="chain" id="PRO_1000087428" description="Glutamyl-Q tRNA(Asp) synthetase">
    <location>
        <begin position="1"/>
        <end position="295"/>
    </location>
</feature>
<feature type="short sequence motif" description="'HIGH' region">
    <location>
        <begin position="8"/>
        <end position="18"/>
    </location>
</feature>
<feature type="short sequence motif" description="'KMSKS' region">
    <location>
        <begin position="234"/>
        <end position="238"/>
    </location>
</feature>
<feature type="binding site" evidence="1">
    <location>
        <begin position="5"/>
        <end position="9"/>
    </location>
    <ligand>
        <name>L-glutamate</name>
        <dbReference type="ChEBI" id="CHEBI:29985"/>
    </ligand>
</feature>
<feature type="binding site" evidence="1">
    <location>
        <position position="41"/>
    </location>
    <ligand>
        <name>L-glutamate</name>
        <dbReference type="ChEBI" id="CHEBI:29985"/>
    </ligand>
</feature>
<feature type="binding site" evidence="1">
    <location>
        <position position="97"/>
    </location>
    <ligand>
        <name>Zn(2+)</name>
        <dbReference type="ChEBI" id="CHEBI:29105"/>
    </ligand>
</feature>
<feature type="binding site" evidence="1">
    <location>
        <position position="99"/>
    </location>
    <ligand>
        <name>Zn(2+)</name>
        <dbReference type="ChEBI" id="CHEBI:29105"/>
    </ligand>
</feature>
<feature type="binding site" evidence="1">
    <location>
        <position position="117"/>
    </location>
    <ligand>
        <name>Zn(2+)</name>
        <dbReference type="ChEBI" id="CHEBI:29105"/>
    </ligand>
</feature>
<feature type="binding site" evidence="1">
    <location>
        <position position="121"/>
    </location>
    <ligand>
        <name>Zn(2+)</name>
        <dbReference type="ChEBI" id="CHEBI:29105"/>
    </ligand>
</feature>
<feature type="binding site" evidence="1">
    <location>
        <position position="178"/>
    </location>
    <ligand>
        <name>L-glutamate</name>
        <dbReference type="ChEBI" id="CHEBI:29985"/>
    </ligand>
</feature>
<feature type="binding site" evidence="1">
    <location>
        <position position="196"/>
    </location>
    <ligand>
        <name>L-glutamate</name>
        <dbReference type="ChEBI" id="CHEBI:29985"/>
    </ligand>
</feature>
<feature type="binding site" evidence="1">
    <location>
        <position position="237"/>
    </location>
    <ligand>
        <name>ATP</name>
        <dbReference type="ChEBI" id="CHEBI:30616"/>
    </ligand>
</feature>
<name>GLUQ_NEIM0</name>
<gene>
    <name evidence="1" type="primary">gluQ</name>
    <name type="ordered locus">NMCC_1793</name>
</gene>
<comment type="function">
    <text evidence="1">Catalyzes the tRNA-independent activation of glutamate in presence of ATP and the subsequent transfer of glutamate onto a tRNA(Asp). Glutamate is transferred on the 2-amino-5-(4,5-dihydroxy-2-cyclopenten-1-yl) moiety of the queuosine in the wobble position of the QUC anticodon.</text>
</comment>
<comment type="cofactor">
    <cofactor evidence="1">
        <name>Zn(2+)</name>
        <dbReference type="ChEBI" id="CHEBI:29105"/>
    </cofactor>
    <text evidence="1">Binds 1 zinc ion per subunit.</text>
</comment>
<comment type="similarity">
    <text evidence="1">Belongs to the class-I aminoacyl-tRNA synthetase family. GluQ subfamily.</text>
</comment>
<keyword id="KW-0030">Aminoacyl-tRNA synthetase</keyword>
<keyword id="KW-0067">ATP-binding</keyword>
<keyword id="KW-0436">Ligase</keyword>
<keyword id="KW-0479">Metal-binding</keyword>
<keyword id="KW-0547">Nucleotide-binding</keyword>
<keyword id="KW-0862">Zinc</keyword>
<evidence type="ECO:0000255" key="1">
    <source>
        <dbReference type="HAMAP-Rule" id="MF_01428"/>
    </source>
</evidence>
<organism>
    <name type="scientific">Neisseria meningitidis serogroup C (strain 053442)</name>
    <dbReference type="NCBI Taxonomy" id="374833"/>
    <lineage>
        <taxon>Bacteria</taxon>
        <taxon>Pseudomonadati</taxon>
        <taxon>Pseudomonadota</taxon>
        <taxon>Betaproteobacteria</taxon>
        <taxon>Neisseriales</taxon>
        <taxon>Neisseriaceae</taxon>
        <taxon>Neisseria</taxon>
    </lineage>
</organism>
<proteinExistence type="inferred from homology"/>
<sequence length="295" mass="33025">MYTGRFAPSPTGLLHIGSLLTAAASYADARSNGGKWLVRMEDLDPPREMPGAASHILHTLEAFGFEWDGEVAYQSRRYALYEETLCRLKTAGLVYPCHCSRKDWQAAARRGADGFVYNGRCRHPGQRPAPQGKQPAWRIRVPDRDIGFSDGIVGGYAQNLARDIGDFVLLRADGYWAYQLAVVADDAEQGVTHIVRGQDLLVSTPRQIYLQQCLGVPTPQYAHLPLLTNAQGQKWSKQTLAPALDLNRREQLLRQVFRYLNLPEAPETDRPAELLDWAVAHWDMDKVPKHAVTPP</sequence>
<protein>
    <recommendedName>
        <fullName evidence="1">Glutamyl-Q tRNA(Asp) synthetase</fullName>
        <shortName evidence="1">Glu-Q-RSs</shortName>
        <ecNumber evidence="1">6.1.1.-</ecNumber>
    </recommendedName>
</protein>
<accession>A9M2P1</accession>